<comment type="function">
    <text evidence="1">Catalyzes the reversible phosphorylation of UMP to UDP.</text>
</comment>
<comment type="catalytic activity">
    <reaction evidence="1">
        <text>UMP + ATP = UDP + ADP</text>
        <dbReference type="Rhea" id="RHEA:24400"/>
        <dbReference type="ChEBI" id="CHEBI:30616"/>
        <dbReference type="ChEBI" id="CHEBI:57865"/>
        <dbReference type="ChEBI" id="CHEBI:58223"/>
        <dbReference type="ChEBI" id="CHEBI:456216"/>
        <dbReference type="EC" id="2.7.4.22"/>
    </reaction>
</comment>
<comment type="activity regulation">
    <text evidence="1">Allosterically activated by GTP. Inhibited by UTP.</text>
</comment>
<comment type="pathway">
    <text evidence="1">Pyrimidine metabolism; CTP biosynthesis via de novo pathway; UDP from UMP (UMPK route): step 1/1.</text>
</comment>
<comment type="subunit">
    <text evidence="1">Homohexamer.</text>
</comment>
<comment type="subcellular location">
    <subcellularLocation>
        <location evidence="1">Cytoplasm</location>
    </subcellularLocation>
</comment>
<comment type="similarity">
    <text evidence="1">Belongs to the UMP kinase family.</text>
</comment>
<gene>
    <name evidence="1" type="primary">pyrH</name>
    <name type="ordered locus">YPDSF_1666</name>
</gene>
<keyword id="KW-0021">Allosteric enzyme</keyword>
<keyword id="KW-0067">ATP-binding</keyword>
<keyword id="KW-0963">Cytoplasm</keyword>
<keyword id="KW-0418">Kinase</keyword>
<keyword id="KW-0547">Nucleotide-binding</keyword>
<keyword id="KW-0665">Pyrimidine biosynthesis</keyword>
<keyword id="KW-0808">Transferase</keyword>
<sequence length="241" mass="25973">MATNAKPVYQRILLKLSGEALQGAEGFGIDASVLDRMAQEVKELVELGIQVGVVIGGGNLFRGAGLAQAGMNRVVGDHMGMLATVMNGLAMRDALHRAYVNARLMSAIPLNGVCDNYSWAEAISLLRHNRVVIFAAGTGNPFFTTDSAACLRGIEIEADVVLKATKVDGVYSADPVKNPDATLYEQLTYQDVLEQELKVMDLAAFTLARDHNLPIRVFNMNKPGALRRVVMGENEGTLIAK</sequence>
<proteinExistence type="inferred from homology"/>
<accession>A4TL89</accession>
<reference key="1">
    <citation type="submission" date="2007-02" db="EMBL/GenBank/DDBJ databases">
        <title>Complete sequence of chromosome of Yersinia pestis Pestoides F.</title>
        <authorList>
            <consortium name="US DOE Joint Genome Institute"/>
            <person name="Copeland A."/>
            <person name="Lucas S."/>
            <person name="Lapidus A."/>
            <person name="Barry K."/>
            <person name="Detter J.C."/>
            <person name="Glavina del Rio T."/>
            <person name="Hammon N."/>
            <person name="Israni S."/>
            <person name="Dalin E."/>
            <person name="Tice H."/>
            <person name="Pitluck S."/>
            <person name="Di Bartolo G."/>
            <person name="Chain P."/>
            <person name="Malfatti S."/>
            <person name="Shin M."/>
            <person name="Vergez L."/>
            <person name="Schmutz J."/>
            <person name="Larimer F."/>
            <person name="Land M."/>
            <person name="Hauser L."/>
            <person name="Worsham P."/>
            <person name="Chu M."/>
            <person name="Bearden S."/>
            <person name="Garcia E."/>
            <person name="Richardson P."/>
        </authorList>
    </citation>
    <scope>NUCLEOTIDE SEQUENCE [LARGE SCALE GENOMIC DNA]</scope>
    <source>
        <strain>Pestoides F</strain>
    </source>
</reference>
<dbReference type="EC" id="2.7.4.22" evidence="1"/>
<dbReference type="EMBL" id="CP000668">
    <property type="protein sequence ID" value="ABP40051.1"/>
    <property type="molecule type" value="Genomic_DNA"/>
</dbReference>
<dbReference type="RefSeq" id="WP_002212133.1">
    <property type="nucleotide sequence ID" value="NZ_CP009715.1"/>
</dbReference>
<dbReference type="SMR" id="A4TL89"/>
<dbReference type="GeneID" id="96662368"/>
<dbReference type="KEGG" id="ypp:YPDSF_1666"/>
<dbReference type="PATRIC" id="fig|386656.14.peg.2096"/>
<dbReference type="UniPathway" id="UPA00159">
    <property type="reaction ID" value="UER00275"/>
</dbReference>
<dbReference type="GO" id="GO:0005829">
    <property type="term" value="C:cytosol"/>
    <property type="evidence" value="ECO:0007669"/>
    <property type="project" value="TreeGrafter"/>
</dbReference>
<dbReference type="GO" id="GO:0005524">
    <property type="term" value="F:ATP binding"/>
    <property type="evidence" value="ECO:0007669"/>
    <property type="project" value="UniProtKB-KW"/>
</dbReference>
<dbReference type="GO" id="GO:0033862">
    <property type="term" value="F:UMP kinase activity"/>
    <property type="evidence" value="ECO:0007669"/>
    <property type="project" value="UniProtKB-EC"/>
</dbReference>
<dbReference type="GO" id="GO:0044210">
    <property type="term" value="P:'de novo' CTP biosynthetic process"/>
    <property type="evidence" value="ECO:0007669"/>
    <property type="project" value="UniProtKB-UniRule"/>
</dbReference>
<dbReference type="GO" id="GO:0006225">
    <property type="term" value="P:UDP biosynthetic process"/>
    <property type="evidence" value="ECO:0007669"/>
    <property type="project" value="TreeGrafter"/>
</dbReference>
<dbReference type="CDD" id="cd04254">
    <property type="entry name" value="AAK_UMPK-PyrH-Ec"/>
    <property type="match status" value="1"/>
</dbReference>
<dbReference type="FunFam" id="3.40.1160.10:FF:000001">
    <property type="entry name" value="Uridylate kinase"/>
    <property type="match status" value="1"/>
</dbReference>
<dbReference type="Gene3D" id="3.40.1160.10">
    <property type="entry name" value="Acetylglutamate kinase-like"/>
    <property type="match status" value="1"/>
</dbReference>
<dbReference type="HAMAP" id="MF_01220_B">
    <property type="entry name" value="PyrH_B"/>
    <property type="match status" value="1"/>
</dbReference>
<dbReference type="InterPro" id="IPR036393">
    <property type="entry name" value="AceGlu_kinase-like_sf"/>
</dbReference>
<dbReference type="InterPro" id="IPR001048">
    <property type="entry name" value="Asp/Glu/Uridylate_kinase"/>
</dbReference>
<dbReference type="InterPro" id="IPR011817">
    <property type="entry name" value="Uridylate_kinase"/>
</dbReference>
<dbReference type="InterPro" id="IPR015963">
    <property type="entry name" value="Uridylate_kinase_bac"/>
</dbReference>
<dbReference type="NCBIfam" id="TIGR02075">
    <property type="entry name" value="pyrH_bact"/>
    <property type="match status" value="1"/>
</dbReference>
<dbReference type="PANTHER" id="PTHR42833">
    <property type="entry name" value="URIDYLATE KINASE"/>
    <property type="match status" value="1"/>
</dbReference>
<dbReference type="PANTHER" id="PTHR42833:SF4">
    <property type="entry name" value="URIDYLATE KINASE PUMPKIN, CHLOROPLASTIC"/>
    <property type="match status" value="1"/>
</dbReference>
<dbReference type="Pfam" id="PF00696">
    <property type="entry name" value="AA_kinase"/>
    <property type="match status" value="1"/>
</dbReference>
<dbReference type="PIRSF" id="PIRSF005650">
    <property type="entry name" value="Uridylate_kin"/>
    <property type="match status" value="1"/>
</dbReference>
<dbReference type="SUPFAM" id="SSF53633">
    <property type="entry name" value="Carbamate kinase-like"/>
    <property type="match status" value="1"/>
</dbReference>
<organism>
    <name type="scientific">Yersinia pestis (strain Pestoides F)</name>
    <dbReference type="NCBI Taxonomy" id="386656"/>
    <lineage>
        <taxon>Bacteria</taxon>
        <taxon>Pseudomonadati</taxon>
        <taxon>Pseudomonadota</taxon>
        <taxon>Gammaproteobacteria</taxon>
        <taxon>Enterobacterales</taxon>
        <taxon>Yersiniaceae</taxon>
        <taxon>Yersinia</taxon>
    </lineage>
</organism>
<feature type="chain" id="PRO_1000054058" description="Uridylate kinase">
    <location>
        <begin position="1"/>
        <end position="241"/>
    </location>
</feature>
<feature type="region of interest" description="Involved in allosteric activation by GTP" evidence="1">
    <location>
        <begin position="23"/>
        <end position="28"/>
    </location>
</feature>
<feature type="binding site" evidence="1">
    <location>
        <begin position="15"/>
        <end position="18"/>
    </location>
    <ligand>
        <name>ATP</name>
        <dbReference type="ChEBI" id="CHEBI:30616"/>
    </ligand>
</feature>
<feature type="binding site" evidence="1">
    <location>
        <position position="57"/>
    </location>
    <ligand>
        <name>UMP</name>
        <dbReference type="ChEBI" id="CHEBI:57865"/>
    </ligand>
</feature>
<feature type="binding site" evidence="1">
    <location>
        <position position="58"/>
    </location>
    <ligand>
        <name>ATP</name>
        <dbReference type="ChEBI" id="CHEBI:30616"/>
    </ligand>
</feature>
<feature type="binding site" evidence="1">
    <location>
        <position position="62"/>
    </location>
    <ligand>
        <name>ATP</name>
        <dbReference type="ChEBI" id="CHEBI:30616"/>
    </ligand>
</feature>
<feature type="binding site" evidence="1">
    <location>
        <position position="77"/>
    </location>
    <ligand>
        <name>UMP</name>
        <dbReference type="ChEBI" id="CHEBI:57865"/>
    </ligand>
</feature>
<feature type="binding site" evidence="1">
    <location>
        <begin position="138"/>
        <end position="145"/>
    </location>
    <ligand>
        <name>UMP</name>
        <dbReference type="ChEBI" id="CHEBI:57865"/>
    </ligand>
</feature>
<feature type="binding site" evidence="1">
    <location>
        <position position="165"/>
    </location>
    <ligand>
        <name>ATP</name>
        <dbReference type="ChEBI" id="CHEBI:30616"/>
    </ligand>
</feature>
<feature type="binding site" evidence="1">
    <location>
        <position position="171"/>
    </location>
    <ligand>
        <name>ATP</name>
        <dbReference type="ChEBI" id="CHEBI:30616"/>
    </ligand>
</feature>
<feature type="binding site" evidence="1">
    <location>
        <position position="174"/>
    </location>
    <ligand>
        <name>ATP</name>
        <dbReference type="ChEBI" id="CHEBI:30616"/>
    </ligand>
</feature>
<evidence type="ECO:0000255" key="1">
    <source>
        <dbReference type="HAMAP-Rule" id="MF_01220"/>
    </source>
</evidence>
<protein>
    <recommendedName>
        <fullName evidence="1">Uridylate kinase</fullName>
        <shortName evidence="1">UK</shortName>
        <ecNumber evidence="1">2.7.4.22</ecNumber>
    </recommendedName>
    <alternativeName>
        <fullName evidence="1">Uridine monophosphate kinase</fullName>
        <shortName evidence="1">UMP kinase</shortName>
        <shortName evidence="1">UMPK</shortName>
    </alternativeName>
</protein>
<name>PYRH_YERPP</name>